<evidence type="ECO:0000255" key="1">
    <source>
        <dbReference type="HAMAP-Rule" id="MF_01145"/>
    </source>
</evidence>
<dbReference type="EC" id="5.2.1.8" evidence="1"/>
<dbReference type="EMBL" id="AE017262">
    <property type="protein sequence ID" value="AAT04238.1"/>
    <property type="molecule type" value="Genomic_DNA"/>
</dbReference>
<dbReference type="RefSeq" id="WP_003727435.1">
    <property type="nucleotide sequence ID" value="NC_002973.6"/>
</dbReference>
<dbReference type="SMR" id="Q71ZM6"/>
<dbReference type="DNASU" id="2798683"/>
<dbReference type="KEGG" id="lmf:LMOf2365_1463"/>
<dbReference type="HOGENOM" id="CLU_034646_6_1_9"/>
<dbReference type="PHI-base" id="PHI:6136"/>
<dbReference type="GO" id="GO:0005886">
    <property type="term" value="C:plasma membrane"/>
    <property type="evidence" value="ECO:0007669"/>
    <property type="project" value="UniProtKB-SubCell"/>
</dbReference>
<dbReference type="GO" id="GO:0003755">
    <property type="term" value="F:peptidyl-prolyl cis-trans isomerase activity"/>
    <property type="evidence" value="ECO:0007669"/>
    <property type="project" value="UniProtKB-UniRule"/>
</dbReference>
<dbReference type="GO" id="GO:0006457">
    <property type="term" value="P:protein folding"/>
    <property type="evidence" value="ECO:0007669"/>
    <property type="project" value="UniProtKB-UniRule"/>
</dbReference>
<dbReference type="FunFam" id="3.10.50.40:FF:000042">
    <property type="entry name" value="Foldase protein PrsA"/>
    <property type="match status" value="1"/>
</dbReference>
<dbReference type="Gene3D" id="3.10.50.40">
    <property type="match status" value="1"/>
</dbReference>
<dbReference type="HAMAP" id="MF_01145">
    <property type="entry name" value="Foldase_PrsA"/>
    <property type="match status" value="1"/>
</dbReference>
<dbReference type="InterPro" id="IPR023059">
    <property type="entry name" value="Foldase_PrsA"/>
</dbReference>
<dbReference type="InterPro" id="IPR046357">
    <property type="entry name" value="PPIase_dom_sf"/>
</dbReference>
<dbReference type="InterPro" id="IPR000297">
    <property type="entry name" value="PPIase_PpiC"/>
</dbReference>
<dbReference type="InterPro" id="IPR050245">
    <property type="entry name" value="PrsA_foldase"/>
</dbReference>
<dbReference type="InterPro" id="IPR027304">
    <property type="entry name" value="Trigger_fact/SurA_dom_sf"/>
</dbReference>
<dbReference type="PANTHER" id="PTHR47245:SF1">
    <property type="entry name" value="FOLDASE PROTEIN PRSA"/>
    <property type="match status" value="1"/>
</dbReference>
<dbReference type="PANTHER" id="PTHR47245">
    <property type="entry name" value="PEPTIDYLPROLYL ISOMERASE"/>
    <property type="match status" value="1"/>
</dbReference>
<dbReference type="Pfam" id="PF13616">
    <property type="entry name" value="Rotamase_3"/>
    <property type="match status" value="1"/>
</dbReference>
<dbReference type="SUPFAM" id="SSF54534">
    <property type="entry name" value="FKBP-like"/>
    <property type="match status" value="1"/>
</dbReference>
<dbReference type="SUPFAM" id="SSF109998">
    <property type="entry name" value="Triger factor/SurA peptide-binding domain-like"/>
    <property type="match status" value="1"/>
</dbReference>
<dbReference type="PROSITE" id="PS50198">
    <property type="entry name" value="PPIC_PPIASE_2"/>
    <property type="match status" value="1"/>
</dbReference>
<dbReference type="PROSITE" id="PS51257">
    <property type="entry name" value="PROKAR_LIPOPROTEIN"/>
    <property type="match status" value="1"/>
</dbReference>
<organism>
    <name type="scientific">Listeria monocytogenes serotype 4b (strain F2365)</name>
    <dbReference type="NCBI Taxonomy" id="265669"/>
    <lineage>
        <taxon>Bacteria</taxon>
        <taxon>Bacillati</taxon>
        <taxon>Bacillota</taxon>
        <taxon>Bacilli</taxon>
        <taxon>Bacillales</taxon>
        <taxon>Listeriaceae</taxon>
        <taxon>Listeria</taxon>
    </lineage>
</organism>
<name>PRSA1_LISMF</name>
<sequence>MTKLKKVMISVIAATLLLLAGCGSSAVVKTDAGSVTQDELYEAMKTTYGNEVVQQLTFKKILEDKYTVTEKEVNAEYKKYEEQYGDSFESTLSSNNLTKTSFKENLEYNLLVQKATEANMNVSESKLKTYYKTWEPDITVRHILVDDEATAKEIQTKLKNGEKFTDLAKEYSTDTATSTNGGLLDPFGPGEMDETFEKAAYALENKDDVSGIVKSTYGYHLIQLVKKTEKGTYAKEKANVKAAYIESQLTTENMTAALKKELKAANIDIKDSDLKDAFADYTSTSSTSSTTTSN</sequence>
<gene>
    <name evidence="1" type="primary">prsA1</name>
    <name type="ordered locus">LMOf2365_1463</name>
</gene>
<reference key="1">
    <citation type="journal article" date="2004" name="Nucleic Acids Res.">
        <title>Whole genome comparisons of serotype 4b and 1/2a strains of the food-borne pathogen Listeria monocytogenes reveal new insights into the core genome components of this species.</title>
        <authorList>
            <person name="Nelson K.E."/>
            <person name="Fouts D.E."/>
            <person name="Mongodin E.F."/>
            <person name="Ravel J."/>
            <person name="DeBoy R.T."/>
            <person name="Kolonay J.F."/>
            <person name="Rasko D.A."/>
            <person name="Angiuoli S.V."/>
            <person name="Gill S.R."/>
            <person name="Paulsen I.T."/>
            <person name="Peterson J.D."/>
            <person name="White O."/>
            <person name="Nelson W.C."/>
            <person name="Nierman W.C."/>
            <person name="Beanan M.J."/>
            <person name="Brinkac L.M."/>
            <person name="Daugherty S.C."/>
            <person name="Dodson R.J."/>
            <person name="Durkin A.S."/>
            <person name="Madupu R."/>
            <person name="Haft D.H."/>
            <person name="Selengut J."/>
            <person name="Van Aken S.E."/>
            <person name="Khouri H.M."/>
            <person name="Fedorova N."/>
            <person name="Forberger H.A."/>
            <person name="Tran B."/>
            <person name="Kathariou S."/>
            <person name="Wonderling L.D."/>
            <person name="Uhlich G.A."/>
            <person name="Bayles D.O."/>
            <person name="Luchansky J.B."/>
            <person name="Fraser C.M."/>
        </authorList>
    </citation>
    <scope>NUCLEOTIDE SEQUENCE [LARGE SCALE GENOMIC DNA]</scope>
    <source>
        <strain>F2365</strain>
    </source>
</reference>
<keyword id="KW-1003">Cell membrane</keyword>
<keyword id="KW-0413">Isomerase</keyword>
<keyword id="KW-0449">Lipoprotein</keyword>
<keyword id="KW-0472">Membrane</keyword>
<keyword id="KW-0564">Palmitate</keyword>
<keyword id="KW-0697">Rotamase</keyword>
<keyword id="KW-0732">Signal</keyword>
<accession>Q71ZM6</accession>
<feature type="signal peptide" evidence="1">
    <location>
        <begin position="1"/>
        <end position="21"/>
    </location>
</feature>
<feature type="chain" id="PRO_0000029311" description="Foldase protein PrsA 1">
    <location>
        <begin position="22"/>
        <end position="294"/>
    </location>
</feature>
<feature type="domain" description="PpiC" evidence="1">
    <location>
        <begin position="135"/>
        <end position="226"/>
    </location>
</feature>
<feature type="lipid moiety-binding region" description="N-palmitoyl cysteine" evidence="1">
    <location>
        <position position="22"/>
    </location>
</feature>
<feature type="lipid moiety-binding region" description="S-diacylglycerol cysteine" evidence="1">
    <location>
        <position position="22"/>
    </location>
</feature>
<protein>
    <recommendedName>
        <fullName evidence="1">Foldase protein PrsA 1</fullName>
        <ecNumber evidence="1">5.2.1.8</ecNumber>
    </recommendedName>
</protein>
<comment type="function">
    <text evidence="1">Plays a major role in protein secretion by helping the post-translocational extracellular folding of several secreted proteins.</text>
</comment>
<comment type="catalytic activity">
    <reaction evidence="1">
        <text>[protein]-peptidylproline (omega=180) = [protein]-peptidylproline (omega=0)</text>
        <dbReference type="Rhea" id="RHEA:16237"/>
        <dbReference type="Rhea" id="RHEA-COMP:10747"/>
        <dbReference type="Rhea" id="RHEA-COMP:10748"/>
        <dbReference type="ChEBI" id="CHEBI:83833"/>
        <dbReference type="ChEBI" id="CHEBI:83834"/>
        <dbReference type="EC" id="5.2.1.8"/>
    </reaction>
</comment>
<comment type="subcellular location">
    <subcellularLocation>
        <location evidence="1">Cell membrane</location>
        <topology evidence="1">Lipid-anchor</topology>
    </subcellularLocation>
</comment>
<comment type="similarity">
    <text evidence="1">Belongs to the PrsA family.</text>
</comment>
<proteinExistence type="inferred from homology"/>